<dbReference type="EC" id="5.4.99.25" evidence="1"/>
<dbReference type="EMBL" id="AE017262">
    <property type="protein sequence ID" value="AAT04120.1"/>
    <property type="molecule type" value="Genomic_DNA"/>
</dbReference>
<dbReference type="RefSeq" id="WP_010958888.1">
    <property type="nucleotide sequence ID" value="NC_002973.6"/>
</dbReference>
<dbReference type="SMR" id="Q71ZZ4"/>
<dbReference type="KEGG" id="lmf:LMOf2365_1345"/>
<dbReference type="HOGENOM" id="CLU_032087_0_1_9"/>
<dbReference type="GO" id="GO:0003723">
    <property type="term" value="F:RNA binding"/>
    <property type="evidence" value="ECO:0007669"/>
    <property type="project" value="InterPro"/>
</dbReference>
<dbReference type="GO" id="GO:0160148">
    <property type="term" value="F:tRNA pseudouridine(55) synthase activity"/>
    <property type="evidence" value="ECO:0007669"/>
    <property type="project" value="UniProtKB-EC"/>
</dbReference>
<dbReference type="GO" id="GO:1990481">
    <property type="term" value="P:mRNA pseudouridine synthesis"/>
    <property type="evidence" value="ECO:0007669"/>
    <property type="project" value="TreeGrafter"/>
</dbReference>
<dbReference type="GO" id="GO:0031119">
    <property type="term" value="P:tRNA pseudouridine synthesis"/>
    <property type="evidence" value="ECO:0007669"/>
    <property type="project" value="UniProtKB-UniRule"/>
</dbReference>
<dbReference type="CDD" id="cd02573">
    <property type="entry name" value="PseudoU_synth_EcTruB"/>
    <property type="match status" value="1"/>
</dbReference>
<dbReference type="FunFam" id="3.30.2350.10:FF:000011">
    <property type="entry name" value="tRNA pseudouridine synthase B"/>
    <property type="match status" value="1"/>
</dbReference>
<dbReference type="Gene3D" id="3.30.2350.10">
    <property type="entry name" value="Pseudouridine synthase"/>
    <property type="match status" value="1"/>
</dbReference>
<dbReference type="HAMAP" id="MF_01080">
    <property type="entry name" value="TruB_bact"/>
    <property type="match status" value="1"/>
</dbReference>
<dbReference type="InterPro" id="IPR020103">
    <property type="entry name" value="PsdUridine_synth_cat_dom_sf"/>
</dbReference>
<dbReference type="InterPro" id="IPR002501">
    <property type="entry name" value="PsdUridine_synth_N"/>
</dbReference>
<dbReference type="InterPro" id="IPR014780">
    <property type="entry name" value="tRNA_psdUridine_synth_TruB"/>
</dbReference>
<dbReference type="InterPro" id="IPR032819">
    <property type="entry name" value="TruB_C"/>
</dbReference>
<dbReference type="NCBIfam" id="TIGR00431">
    <property type="entry name" value="TruB"/>
    <property type="match status" value="1"/>
</dbReference>
<dbReference type="PANTHER" id="PTHR13767:SF2">
    <property type="entry name" value="PSEUDOURIDYLATE SYNTHASE TRUB1"/>
    <property type="match status" value="1"/>
</dbReference>
<dbReference type="PANTHER" id="PTHR13767">
    <property type="entry name" value="TRNA-PSEUDOURIDINE SYNTHASE"/>
    <property type="match status" value="1"/>
</dbReference>
<dbReference type="Pfam" id="PF16198">
    <property type="entry name" value="TruB_C_2"/>
    <property type="match status" value="1"/>
</dbReference>
<dbReference type="Pfam" id="PF01509">
    <property type="entry name" value="TruB_N"/>
    <property type="match status" value="1"/>
</dbReference>
<dbReference type="SUPFAM" id="SSF55120">
    <property type="entry name" value="Pseudouridine synthase"/>
    <property type="match status" value="1"/>
</dbReference>
<comment type="function">
    <text evidence="1">Responsible for synthesis of pseudouridine from uracil-55 in the psi GC loop of transfer RNAs.</text>
</comment>
<comment type="catalytic activity">
    <reaction evidence="1">
        <text>uridine(55) in tRNA = pseudouridine(55) in tRNA</text>
        <dbReference type="Rhea" id="RHEA:42532"/>
        <dbReference type="Rhea" id="RHEA-COMP:10101"/>
        <dbReference type="Rhea" id="RHEA-COMP:10102"/>
        <dbReference type="ChEBI" id="CHEBI:65314"/>
        <dbReference type="ChEBI" id="CHEBI:65315"/>
        <dbReference type="EC" id="5.4.99.25"/>
    </reaction>
</comment>
<comment type="similarity">
    <text evidence="1">Belongs to the pseudouridine synthase TruB family. Type 1 subfamily.</text>
</comment>
<feature type="chain" id="PRO_0000121858" description="tRNA pseudouridine synthase B">
    <location>
        <begin position="1"/>
        <end position="304"/>
    </location>
</feature>
<feature type="active site" description="Nucleophile" evidence="1">
    <location>
        <position position="38"/>
    </location>
</feature>
<protein>
    <recommendedName>
        <fullName evidence="1">tRNA pseudouridine synthase B</fullName>
        <ecNumber evidence="1">5.4.99.25</ecNumber>
    </recommendedName>
    <alternativeName>
        <fullName evidence="1">tRNA pseudouridine(55) synthase</fullName>
        <shortName evidence="1">Psi55 synthase</shortName>
    </alternativeName>
    <alternativeName>
        <fullName evidence="1">tRNA pseudouridylate synthase</fullName>
    </alternativeName>
    <alternativeName>
        <fullName evidence="1">tRNA-uridine isomerase</fullName>
    </alternativeName>
</protein>
<evidence type="ECO:0000255" key="1">
    <source>
        <dbReference type="HAMAP-Rule" id="MF_01080"/>
    </source>
</evidence>
<gene>
    <name evidence="1" type="primary">truB</name>
    <name type="ordered locus">LMOf2365_1345</name>
</gene>
<reference key="1">
    <citation type="journal article" date="2004" name="Nucleic Acids Res.">
        <title>Whole genome comparisons of serotype 4b and 1/2a strains of the food-borne pathogen Listeria monocytogenes reveal new insights into the core genome components of this species.</title>
        <authorList>
            <person name="Nelson K.E."/>
            <person name="Fouts D.E."/>
            <person name="Mongodin E.F."/>
            <person name="Ravel J."/>
            <person name="DeBoy R.T."/>
            <person name="Kolonay J.F."/>
            <person name="Rasko D.A."/>
            <person name="Angiuoli S.V."/>
            <person name="Gill S.R."/>
            <person name="Paulsen I.T."/>
            <person name="Peterson J.D."/>
            <person name="White O."/>
            <person name="Nelson W.C."/>
            <person name="Nierman W.C."/>
            <person name="Beanan M.J."/>
            <person name="Brinkac L.M."/>
            <person name="Daugherty S.C."/>
            <person name="Dodson R.J."/>
            <person name="Durkin A.S."/>
            <person name="Madupu R."/>
            <person name="Haft D.H."/>
            <person name="Selengut J."/>
            <person name="Van Aken S.E."/>
            <person name="Khouri H.M."/>
            <person name="Fedorova N."/>
            <person name="Forberger H.A."/>
            <person name="Tran B."/>
            <person name="Kathariou S."/>
            <person name="Wonderling L.D."/>
            <person name="Uhlich G.A."/>
            <person name="Bayles D.O."/>
            <person name="Luchansky J.B."/>
            <person name="Fraser C.M."/>
        </authorList>
    </citation>
    <scope>NUCLEOTIDE SEQUENCE [LARGE SCALE GENOMIC DNA]</scope>
    <source>
        <strain>F2365</strain>
    </source>
</reference>
<proteinExistence type="inferred from homology"/>
<keyword id="KW-0413">Isomerase</keyword>
<keyword id="KW-0819">tRNA processing</keyword>
<name>TRUB_LISMF</name>
<sequence length="304" mass="33824">MNGIIPLWKERGMTSHDCVFKLRKILHTKKVGHTGTLDPEVEGVLPICIGRATKLAEYVTDEGKVYVAEITLGKSTTTEDATGETVMTKELADISADELQAALTKLTGKITQIPPMFSAVKVNGKKLYEYARAGIEVERPSRQVDIYSLTRLNGEATLNEANPTFQLEISCGKGTYIRTLAVMIGELLGYPAHMSKLERTRSGFFKKEDCLTLAEIDEMMQASDSSFLYPLEKGIESMAKLVIDEEIHAKVLNGGLLPKSLFIEVENEPRAALIFNDKLTAIYKPHPEKNELWKPEKVIELHQA</sequence>
<organism>
    <name type="scientific">Listeria monocytogenes serotype 4b (strain F2365)</name>
    <dbReference type="NCBI Taxonomy" id="265669"/>
    <lineage>
        <taxon>Bacteria</taxon>
        <taxon>Bacillati</taxon>
        <taxon>Bacillota</taxon>
        <taxon>Bacilli</taxon>
        <taxon>Bacillales</taxon>
        <taxon>Listeriaceae</taxon>
        <taxon>Listeria</taxon>
    </lineage>
</organism>
<accession>Q71ZZ4</accession>